<name>NU2C_TRACE</name>
<geneLocation type="chloroplast"/>
<feature type="chain" id="PRO_0000344283" description="NAD(P)H-quinone oxidoreductase subunit 2, chloroplastic">
    <location>
        <begin position="1"/>
        <end position="510"/>
    </location>
</feature>
<feature type="transmembrane region" description="Helical" evidence="1">
    <location>
        <begin position="26"/>
        <end position="46"/>
    </location>
</feature>
<feature type="transmembrane region" description="Helical" evidence="1">
    <location>
        <begin position="57"/>
        <end position="77"/>
    </location>
</feature>
<feature type="transmembrane region" description="Helical" evidence="1">
    <location>
        <begin position="99"/>
        <end position="119"/>
    </location>
</feature>
<feature type="transmembrane region" description="Helical" evidence="1">
    <location>
        <begin position="124"/>
        <end position="144"/>
    </location>
</feature>
<feature type="transmembrane region" description="Helical" evidence="1">
    <location>
        <begin position="149"/>
        <end position="169"/>
    </location>
</feature>
<feature type="transmembrane region" description="Helical" evidence="1">
    <location>
        <begin position="184"/>
        <end position="204"/>
    </location>
</feature>
<feature type="transmembrane region" description="Helical" evidence="1">
    <location>
        <begin position="227"/>
        <end position="247"/>
    </location>
</feature>
<feature type="transmembrane region" description="Helical" evidence="1">
    <location>
        <begin position="295"/>
        <end position="315"/>
    </location>
</feature>
<feature type="transmembrane region" description="Helical" evidence="1">
    <location>
        <begin position="323"/>
        <end position="343"/>
    </location>
</feature>
<feature type="transmembrane region" description="Helical" evidence="1">
    <location>
        <begin position="354"/>
        <end position="374"/>
    </location>
</feature>
<feature type="transmembrane region" description="Helical" evidence="1">
    <location>
        <begin position="395"/>
        <end position="415"/>
    </location>
</feature>
<feature type="transmembrane region" description="Helical" evidence="1">
    <location>
        <begin position="418"/>
        <end position="438"/>
    </location>
</feature>
<feature type="transmembrane region" description="Helical" evidence="1">
    <location>
        <begin position="484"/>
        <end position="504"/>
    </location>
</feature>
<evidence type="ECO:0000255" key="1">
    <source>
        <dbReference type="HAMAP-Rule" id="MF_00445"/>
    </source>
</evidence>
<protein>
    <recommendedName>
        <fullName evidence="1">NAD(P)H-quinone oxidoreductase subunit 2, chloroplastic</fullName>
        <ecNumber evidence="1">7.1.1.-</ecNumber>
    </recommendedName>
    <alternativeName>
        <fullName evidence="1">NAD(P)H dehydrogenase, subunit 2</fullName>
    </alternativeName>
    <alternativeName>
        <fullName evidence="1">NADH-plastoquinone oxidoreductase subunit 2</fullName>
    </alternativeName>
</protein>
<dbReference type="EC" id="7.1.1.-" evidence="1"/>
<dbReference type="EMBL" id="EU090187">
    <property type="protein sequence ID" value="ABV26524.1"/>
    <property type="molecule type" value="Genomic_DNA"/>
</dbReference>
<dbReference type="RefSeq" id="YP_001718699.1">
    <property type="nucleotide sequence ID" value="NC_010442.1"/>
</dbReference>
<dbReference type="SMR" id="B1NTR4"/>
<dbReference type="GeneID" id="6155971"/>
<dbReference type="GO" id="GO:0009535">
    <property type="term" value="C:chloroplast thylakoid membrane"/>
    <property type="evidence" value="ECO:0007669"/>
    <property type="project" value="UniProtKB-SubCell"/>
</dbReference>
<dbReference type="GO" id="GO:0008137">
    <property type="term" value="F:NADH dehydrogenase (ubiquinone) activity"/>
    <property type="evidence" value="ECO:0007669"/>
    <property type="project" value="InterPro"/>
</dbReference>
<dbReference type="GO" id="GO:0048038">
    <property type="term" value="F:quinone binding"/>
    <property type="evidence" value="ECO:0007669"/>
    <property type="project" value="UniProtKB-KW"/>
</dbReference>
<dbReference type="GO" id="GO:0042773">
    <property type="term" value="P:ATP synthesis coupled electron transport"/>
    <property type="evidence" value="ECO:0007669"/>
    <property type="project" value="InterPro"/>
</dbReference>
<dbReference type="GO" id="GO:0019684">
    <property type="term" value="P:photosynthesis, light reaction"/>
    <property type="evidence" value="ECO:0007669"/>
    <property type="project" value="UniProtKB-UniRule"/>
</dbReference>
<dbReference type="HAMAP" id="MF_00445">
    <property type="entry name" value="NDH1_NuoN_1"/>
    <property type="match status" value="1"/>
</dbReference>
<dbReference type="InterPro" id="IPR010096">
    <property type="entry name" value="NADH-Q_OxRdtase_suN/2"/>
</dbReference>
<dbReference type="InterPro" id="IPR001750">
    <property type="entry name" value="ND/Mrp_TM"/>
</dbReference>
<dbReference type="InterPro" id="IPR045693">
    <property type="entry name" value="Ndh2_N"/>
</dbReference>
<dbReference type="NCBIfam" id="TIGR01770">
    <property type="entry name" value="NDH_I_N"/>
    <property type="match status" value="1"/>
</dbReference>
<dbReference type="NCBIfam" id="NF002701">
    <property type="entry name" value="PRK02504.1"/>
    <property type="match status" value="1"/>
</dbReference>
<dbReference type="PANTHER" id="PTHR22773">
    <property type="entry name" value="NADH DEHYDROGENASE"/>
    <property type="match status" value="1"/>
</dbReference>
<dbReference type="Pfam" id="PF19530">
    <property type="entry name" value="Ndh2_N"/>
    <property type="match status" value="1"/>
</dbReference>
<dbReference type="Pfam" id="PF00361">
    <property type="entry name" value="Proton_antipo_M"/>
    <property type="match status" value="1"/>
</dbReference>
<dbReference type="PRINTS" id="PR01434">
    <property type="entry name" value="NADHDHGNASE5"/>
</dbReference>
<sequence length="510" mass="56736">MIWHVQNDNFILNFTRIFMKAFHLPLFDGSFIFPECILIFGLILLLMIDSTSDQKDIPWLYFISSTSLVMSIMALLFRWREEPMISFSGNFQTNNFNEIFQVLILLCSTLCIPLSVEYIECTEMAITEFLLFVLTATLGGMFLCGANDLITIFVAPECFSFCSYLLSGYTKKDVRSNEATMKYLLMGGASSSILVHGFSWLYGLSGGEIELQEIVNGLINTQMYNSPGISIALIFITVGIGFKLSPAPSHQWTPDVYEGSPTPVVAFLSVTSKVAASALATRIFDIPFYLSSNEWHLLLEILALLSMILGNLIAITQTSMKRMLAYSSIGQIGYIIIGIIVGDSNDGYASMITYMLFYISMNLGTFACIILFGLRTGTDNIRDYAGLYTKDPFLALSLALCLLSLGGLPPLAGFFGKLYLFWCGWQAGLYFLVLIALVTSVLSIYYYLKIIKLLMNGRNQEITPHVGNYRRSSLRSKNSIEFSMIVCVIASTIPGISMNPIIAIAQDSLF</sequence>
<comment type="function">
    <text evidence="1">NDH shuttles electrons from NAD(P)H:plastoquinone, via FMN and iron-sulfur (Fe-S) centers, to quinones in the photosynthetic chain and possibly in a chloroplast respiratory chain. The immediate electron acceptor for the enzyme in this species is believed to be plastoquinone. Couples the redox reaction to proton translocation, and thus conserves the redox energy in a proton gradient.</text>
</comment>
<comment type="catalytic activity">
    <reaction evidence="1">
        <text>a plastoquinone + NADH + (n+1) H(+)(in) = a plastoquinol + NAD(+) + n H(+)(out)</text>
        <dbReference type="Rhea" id="RHEA:42608"/>
        <dbReference type="Rhea" id="RHEA-COMP:9561"/>
        <dbReference type="Rhea" id="RHEA-COMP:9562"/>
        <dbReference type="ChEBI" id="CHEBI:15378"/>
        <dbReference type="ChEBI" id="CHEBI:17757"/>
        <dbReference type="ChEBI" id="CHEBI:57540"/>
        <dbReference type="ChEBI" id="CHEBI:57945"/>
        <dbReference type="ChEBI" id="CHEBI:62192"/>
    </reaction>
</comment>
<comment type="catalytic activity">
    <reaction evidence="1">
        <text>a plastoquinone + NADPH + (n+1) H(+)(in) = a plastoquinol + NADP(+) + n H(+)(out)</text>
        <dbReference type="Rhea" id="RHEA:42612"/>
        <dbReference type="Rhea" id="RHEA-COMP:9561"/>
        <dbReference type="Rhea" id="RHEA-COMP:9562"/>
        <dbReference type="ChEBI" id="CHEBI:15378"/>
        <dbReference type="ChEBI" id="CHEBI:17757"/>
        <dbReference type="ChEBI" id="CHEBI:57783"/>
        <dbReference type="ChEBI" id="CHEBI:58349"/>
        <dbReference type="ChEBI" id="CHEBI:62192"/>
    </reaction>
</comment>
<comment type="subunit">
    <text evidence="1">NDH is composed of at least 16 different subunits, 5 of which are encoded in the nucleus.</text>
</comment>
<comment type="subcellular location">
    <subcellularLocation>
        <location evidence="1">Plastid</location>
        <location evidence="1">Chloroplast thylakoid membrane</location>
        <topology evidence="1">Multi-pass membrane protein</topology>
    </subcellularLocation>
</comment>
<comment type="similarity">
    <text evidence="1">Belongs to the complex I subunit 2 family.</text>
</comment>
<keyword id="KW-0150">Chloroplast</keyword>
<keyword id="KW-0472">Membrane</keyword>
<keyword id="KW-0520">NAD</keyword>
<keyword id="KW-0521">NADP</keyword>
<keyword id="KW-0934">Plastid</keyword>
<keyword id="KW-0618">Plastoquinone</keyword>
<keyword id="KW-0874">Quinone</keyword>
<keyword id="KW-0793">Thylakoid</keyword>
<keyword id="KW-1278">Translocase</keyword>
<keyword id="KW-0812">Transmembrane</keyword>
<keyword id="KW-1133">Transmembrane helix</keyword>
<keyword id="KW-0813">Transport</keyword>
<accession>B1NTR4</accession>
<reference key="1">
    <citation type="journal article" date="2008" name="J. Mol. Evol.">
        <title>Extensive rearrangements in the chloroplast genome of Trachelium caeruleum are associated with repeats and tRNA genes.</title>
        <authorList>
            <person name="Haberle R.C."/>
            <person name="Fourcade H.M."/>
            <person name="Boore J.L."/>
            <person name="Jansen R.K."/>
        </authorList>
    </citation>
    <scope>NUCLEOTIDE SEQUENCE [LARGE SCALE GENOMIC DNA]</scope>
</reference>
<proteinExistence type="inferred from homology"/>
<organism>
    <name type="scientific">Trachelium caeruleum</name>
    <name type="common">Blue throatwort</name>
    <dbReference type="NCBI Taxonomy" id="28494"/>
    <lineage>
        <taxon>Eukaryota</taxon>
        <taxon>Viridiplantae</taxon>
        <taxon>Streptophyta</taxon>
        <taxon>Embryophyta</taxon>
        <taxon>Tracheophyta</taxon>
        <taxon>Spermatophyta</taxon>
        <taxon>Magnoliopsida</taxon>
        <taxon>eudicotyledons</taxon>
        <taxon>Gunneridae</taxon>
        <taxon>Pentapetalae</taxon>
        <taxon>asterids</taxon>
        <taxon>campanulids</taxon>
        <taxon>Asterales</taxon>
        <taxon>Campanulaceae</taxon>
        <taxon>Trachelium</taxon>
    </lineage>
</organism>
<gene>
    <name evidence="1" type="primary">ndhB</name>
</gene>